<keyword id="KW-1185">Reference proteome</keyword>
<evidence type="ECO:0000305" key="1"/>
<comment type="similarity">
    <text evidence="1">Belongs to the mycobacterial PPE family.</text>
</comment>
<dbReference type="EMBL" id="AE000516">
    <property type="protein sequence ID" value="AAK47549.1"/>
    <property type="molecule type" value="Genomic_DNA"/>
</dbReference>
<dbReference type="PIR" id="D70922">
    <property type="entry name" value="D70922"/>
</dbReference>
<dbReference type="RefSeq" id="WP_003899929.1">
    <property type="nucleotide sequence ID" value="NZ_KK341227.1"/>
</dbReference>
<dbReference type="SMR" id="P9WHY4"/>
<dbReference type="KEGG" id="mtc:MT3209"/>
<dbReference type="PATRIC" id="fig|83331.31.peg.3459"/>
<dbReference type="HOGENOM" id="CLU_000243_0_1_11"/>
<dbReference type="Proteomes" id="UP000001020">
    <property type="component" value="Chromosome"/>
</dbReference>
<dbReference type="GO" id="GO:0052572">
    <property type="term" value="P:response to host immune response"/>
    <property type="evidence" value="ECO:0007669"/>
    <property type="project" value="TreeGrafter"/>
</dbReference>
<dbReference type="FunFam" id="1.20.1260.20:FF:000001">
    <property type="entry name" value="PPE family protein PPE41"/>
    <property type="match status" value="1"/>
</dbReference>
<dbReference type="Gene3D" id="1.20.1260.20">
    <property type="entry name" value="PPE superfamily"/>
    <property type="match status" value="1"/>
</dbReference>
<dbReference type="InterPro" id="IPR022171">
    <property type="entry name" value="PPE_C"/>
</dbReference>
<dbReference type="InterPro" id="IPR000030">
    <property type="entry name" value="PPE_dom"/>
</dbReference>
<dbReference type="InterPro" id="IPR038332">
    <property type="entry name" value="PPE_sf"/>
</dbReference>
<dbReference type="PANTHER" id="PTHR46766">
    <property type="entry name" value="GLUTAMINE-RICH PROTEIN 2"/>
    <property type="match status" value="1"/>
</dbReference>
<dbReference type="PANTHER" id="PTHR46766:SF1">
    <property type="entry name" value="GLUTAMINE-RICH PROTEIN 2"/>
    <property type="match status" value="1"/>
</dbReference>
<dbReference type="Pfam" id="PF00823">
    <property type="entry name" value="PPE"/>
    <property type="match status" value="1"/>
</dbReference>
<dbReference type="Pfam" id="PF12484">
    <property type="entry name" value="PPE-SVP"/>
    <property type="match status" value="1"/>
</dbReference>
<dbReference type="SUPFAM" id="SSF140459">
    <property type="entry name" value="PE/PPE dimer-like"/>
    <property type="match status" value="1"/>
</dbReference>
<reference key="1">
    <citation type="journal article" date="2002" name="J. Bacteriol.">
        <title>Whole-genome comparison of Mycobacterium tuberculosis clinical and laboratory strains.</title>
        <authorList>
            <person name="Fleischmann R.D."/>
            <person name="Alland D."/>
            <person name="Eisen J.A."/>
            <person name="Carpenter L."/>
            <person name="White O."/>
            <person name="Peterson J.D."/>
            <person name="DeBoy R.T."/>
            <person name="Dodson R.J."/>
            <person name="Gwinn M.L."/>
            <person name="Haft D.H."/>
            <person name="Hickey E.K."/>
            <person name="Kolonay J.F."/>
            <person name="Nelson W.C."/>
            <person name="Umayam L.A."/>
            <person name="Ermolaeva M.D."/>
            <person name="Salzberg S.L."/>
            <person name="Delcher A."/>
            <person name="Utterback T.R."/>
            <person name="Weidman J.F."/>
            <person name="Khouri H.M."/>
            <person name="Gill J."/>
            <person name="Mikula A."/>
            <person name="Bishai W."/>
            <person name="Jacobs W.R. Jr."/>
            <person name="Venter J.C."/>
            <person name="Fraser C.M."/>
        </authorList>
    </citation>
    <scope>NUCLEOTIDE SEQUENCE [LARGE SCALE GENOMIC DNA]</scope>
    <source>
        <strain>CDC 1551 / Oshkosh</strain>
    </source>
</reference>
<protein>
    <recommendedName>
        <fullName>Uncharacterized PPE family protein PPE49</fullName>
    </recommendedName>
</protein>
<gene>
    <name type="primary">PPE49</name>
    <name type="ordered locus">MT3209</name>
</gene>
<sequence>MVLGFSWLPPEINSARMFAGAGSGPLFAAASAWEGLAADLWASASSFESVLAALTTGPWTGPASMSMAAAASPYVGWLSTVASQAQLAAIQARAAATAFEAALAATVHPTAVTANRVSLASLIAANVLGQNTPAIAATEFDYLEMWAQDVAAMVGYHAGAKSVAATLAPFSLPPVSLAGLAAQVGTQVAGMATTASAAVTPVVEGAMASVPTVMSGMQSLVSQLPLQHASMLFLPVRILTSPITTLASMARESATRLGPPAGGLAAANTPNPSGAAIPAFKPLGGRELGAGMSAGLGQAQLVGSMSVPPTWQGSIPISMASSAMSGLGVPPNPVALTQAAGAAGGGMPMMLMPMSISGAGAGMPGGLMDRDGAGWHVTQARLTVIPRTGVG</sequence>
<feature type="chain" id="PRO_0000428101" description="Uncharacterized PPE family protein PPE49">
    <location>
        <begin position="1"/>
        <end position="391"/>
    </location>
</feature>
<name>PPE49_MYCTO</name>
<organism>
    <name type="scientific">Mycobacterium tuberculosis (strain CDC 1551 / Oshkosh)</name>
    <dbReference type="NCBI Taxonomy" id="83331"/>
    <lineage>
        <taxon>Bacteria</taxon>
        <taxon>Bacillati</taxon>
        <taxon>Actinomycetota</taxon>
        <taxon>Actinomycetes</taxon>
        <taxon>Mycobacteriales</taxon>
        <taxon>Mycobacteriaceae</taxon>
        <taxon>Mycobacterium</taxon>
        <taxon>Mycobacterium tuberculosis complex</taxon>
    </lineage>
</organism>
<proteinExistence type="inferred from homology"/>
<accession>P9WHY4</accession>
<accession>L0TD84</accession>
<accession>Q6MX09</accession>
<accession>Q7D631</accession>